<comment type="catalytic activity">
    <reaction evidence="1">
        <text>tRNA(Cys) + L-cysteine + ATP = L-cysteinyl-tRNA(Cys) + AMP + diphosphate</text>
        <dbReference type="Rhea" id="RHEA:17773"/>
        <dbReference type="Rhea" id="RHEA-COMP:9661"/>
        <dbReference type="Rhea" id="RHEA-COMP:9679"/>
        <dbReference type="ChEBI" id="CHEBI:30616"/>
        <dbReference type="ChEBI" id="CHEBI:33019"/>
        <dbReference type="ChEBI" id="CHEBI:35235"/>
        <dbReference type="ChEBI" id="CHEBI:78442"/>
        <dbReference type="ChEBI" id="CHEBI:78517"/>
        <dbReference type="ChEBI" id="CHEBI:456215"/>
        <dbReference type="EC" id="6.1.1.16"/>
    </reaction>
</comment>
<comment type="cofactor">
    <cofactor evidence="1">
        <name>Zn(2+)</name>
        <dbReference type="ChEBI" id="CHEBI:29105"/>
    </cofactor>
    <text evidence="1">Binds 1 zinc ion per subunit.</text>
</comment>
<comment type="subunit">
    <text evidence="1">Monomer.</text>
</comment>
<comment type="subcellular location">
    <subcellularLocation>
        <location evidence="1">Cytoplasm</location>
    </subcellularLocation>
</comment>
<comment type="similarity">
    <text evidence="1">Belongs to the class-I aminoacyl-tRNA synthetase family.</text>
</comment>
<protein>
    <recommendedName>
        <fullName evidence="1">Cysteine--tRNA ligase</fullName>
        <ecNumber evidence="1">6.1.1.16</ecNumber>
    </recommendedName>
    <alternativeName>
        <fullName evidence="1">Cysteinyl-tRNA synthetase</fullName>
        <shortName evidence="1">CysRS</shortName>
    </alternativeName>
</protein>
<accession>Q5GZD9</accession>
<dbReference type="EC" id="6.1.1.16" evidence="1"/>
<dbReference type="EMBL" id="AE013598">
    <property type="protein sequence ID" value="AAW75932.1"/>
    <property type="molecule type" value="Genomic_DNA"/>
</dbReference>
<dbReference type="SMR" id="Q5GZD9"/>
<dbReference type="STRING" id="291331.XOO2678"/>
<dbReference type="KEGG" id="xoo:XOO2678"/>
<dbReference type="HOGENOM" id="CLU_013528_0_1_6"/>
<dbReference type="Proteomes" id="UP000006735">
    <property type="component" value="Chromosome"/>
</dbReference>
<dbReference type="GO" id="GO:0005829">
    <property type="term" value="C:cytosol"/>
    <property type="evidence" value="ECO:0007669"/>
    <property type="project" value="TreeGrafter"/>
</dbReference>
<dbReference type="GO" id="GO:0005524">
    <property type="term" value="F:ATP binding"/>
    <property type="evidence" value="ECO:0007669"/>
    <property type="project" value="UniProtKB-UniRule"/>
</dbReference>
<dbReference type="GO" id="GO:0004817">
    <property type="term" value="F:cysteine-tRNA ligase activity"/>
    <property type="evidence" value="ECO:0007669"/>
    <property type="project" value="UniProtKB-UniRule"/>
</dbReference>
<dbReference type="GO" id="GO:0008270">
    <property type="term" value="F:zinc ion binding"/>
    <property type="evidence" value="ECO:0007669"/>
    <property type="project" value="UniProtKB-UniRule"/>
</dbReference>
<dbReference type="GO" id="GO:0006423">
    <property type="term" value="P:cysteinyl-tRNA aminoacylation"/>
    <property type="evidence" value="ECO:0007669"/>
    <property type="project" value="UniProtKB-UniRule"/>
</dbReference>
<dbReference type="CDD" id="cd00672">
    <property type="entry name" value="CysRS_core"/>
    <property type="match status" value="1"/>
</dbReference>
<dbReference type="FunFam" id="3.40.50.620:FF:000068">
    <property type="entry name" value="Cysteine--tRNA ligase"/>
    <property type="match status" value="1"/>
</dbReference>
<dbReference type="Gene3D" id="1.20.120.1910">
    <property type="entry name" value="Cysteine-tRNA ligase, C-terminal anti-codon recognition domain"/>
    <property type="match status" value="1"/>
</dbReference>
<dbReference type="Gene3D" id="3.40.50.620">
    <property type="entry name" value="HUPs"/>
    <property type="match status" value="1"/>
</dbReference>
<dbReference type="HAMAP" id="MF_00041">
    <property type="entry name" value="Cys_tRNA_synth"/>
    <property type="match status" value="1"/>
</dbReference>
<dbReference type="InterPro" id="IPR015803">
    <property type="entry name" value="Cys-tRNA-ligase"/>
</dbReference>
<dbReference type="InterPro" id="IPR015273">
    <property type="entry name" value="Cys-tRNA-synt_Ia_DALR"/>
</dbReference>
<dbReference type="InterPro" id="IPR024909">
    <property type="entry name" value="Cys-tRNA/MSH_ligase"/>
</dbReference>
<dbReference type="InterPro" id="IPR056411">
    <property type="entry name" value="CysS_C"/>
</dbReference>
<dbReference type="InterPro" id="IPR014729">
    <property type="entry name" value="Rossmann-like_a/b/a_fold"/>
</dbReference>
<dbReference type="InterPro" id="IPR032678">
    <property type="entry name" value="tRNA-synt_1_cat_dom"/>
</dbReference>
<dbReference type="InterPro" id="IPR009080">
    <property type="entry name" value="tRNAsynth_Ia_anticodon-bd"/>
</dbReference>
<dbReference type="NCBIfam" id="TIGR00435">
    <property type="entry name" value="cysS"/>
    <property type="match status" value="1"/>
</dbReference>
<dbReference type="PANTHER" id="PTHR10890:SF3">
    <property type="entry name" value="CYSTEINE--TRNA LIGASE, CYTOPLASMIC"/>
    <property type="match status" value="1"/>
</dbReference>
<dbReference type="PANTHER" id="PTHR10890">
    <property type="entry name" value="CYSTEINYL-TRNA SYNTHETASE"/>
    <property type="match status" value="1"/>
</dbReference>
<dbReference type="Pfam" id="PF23493">
    <property type="entry name" value="CysS_C"/>
    <property type="match status" value="1"/>
</dbReference>
<dbReference type="Pfam" id="PF09190">
    <property type="entry name" value="DALR_2"/>
    <property type="match status" value="1"/>
</dbReference>
<dbReference type="Pfam" id="PF01406">
    <property type="entry name" value="tRNA-synt_1e"/>
    <property type="match status" value="1"/>
</dbReference>
<dbReference type="PRINTS" id="PR00983">
    <property type="entry name" value="TRNASYNTHCYS"/>
</dbReference>
<dbReference type="SMART" id="SM00840">
    <property type="entry name" value="DALR_2"/>
    <property type="match status" value="1"/>
</dbReference>
<dbReference type="SUPFAM" id="SSF47323">
    <property type="entry name" value="Anticodon-binding domain of a subclass of class I aminoacyl-tRNA synthetases"/>
    <property type="match status" value="1"/>
</dbReference>
<dbReference type="SUPFAM" id="SSF52374">
    <property type="entry name" value="Nucleotidylyl transferase"/>
    <property type="match status" value="1"/>
</dbReference>
<feature type="chain" id="PRO_0000240976" description="Cysteine--tRNA ligase">
    <location>
        <begin position="1"/>
        <end position="476"/>
    </location>
</feature>
<feature type="short sequence motif" description="'HIGH' region">
    <location>
        <begin position="33"/>
        <end position="43"/>
    </location>
</feature>
<feature type="short sequence motif" description="'KMSKS' region">
    <location>
        <begin position="269"/>
        <end position="273"/>
    </location>
</feature>
<feature type="binding site" evidence="1">
    <location>
        <position position="31"/>
    </location>
    <ligand>
        <name>Zn(2+)</name>
        <dbReference type="ChEBI" id="CHEBI:29105"/>
    </ligand>
</feature>
<feature type="binding site" evidence="1">
    <location>
        <position position="211"/>
    </location>
    <ligand>
        <name>Zn(2+)</name>
        <dbReference type="ChEBI" id="CHEBI:29105"/>
    </ligand>
</feature>
<feature type="binding site" evidence="1">
    <location>
        <position position="236"/>
    </location>
    <ligand>
        <name>Zn(2+)</name>
        <dbReference type="ChEBI" id="CHEBI:29105"/>
    </ligand>
</feature>
<feature type="binding site" evidence="1">
    <location>
        <position position="240"/>
    </location>
    <ligand>
        <name>Zn(2+)</name>
        <dbReference type="ChEBI" id="CHEBI:29105"/>
    </ligand>
</feature>
<feature type="binding site" evidence="1">
    <location>
        <position position="272"/>
    </location>
    <ligand>
        <name>ATP</name>
        <dbReference type="ChEBI" id="CHEBI:30616"/>
    </ligand>
</feature>
<proteinExistence type="inferred from homology"/>
<gene>
    <name evidence="1" type="primary">cysS</name>
    <name type="ordered locus">XOO2678</name>
</gene>
<evidence type="ECO:0000255" key="1">
    <source>
        <dbReference type="HAMAP-Rule" id="MF_00041"/>
    </source>
</evidence>
<name>SYC_XANOR</name>
<reference key="1">
    <citation type="journal article" date="2005" name="Nucleic Acids Res.">
        <title>The genome sequence of Xanthomonas oryzae pathovar oryzae KACC10331, the bacterial blight pathogen of rice.</title>
        <authorList>
            <person name="Lee B.-M."/>
            <person name="Park Y.-J."/>
            <person name="Park D.-S."/>
            <person name="Kang H.-W."/>
            <person name="Kim J.-G."/>
            <person name="Song E.-S."/>
            <person name="Park I.-C."/>
            <person name="Yoon U.-H."/>
            <person name="Hahn J.-H."/>
            <person name="Koo B.-S."/>
            <person name="Lee G.-B."/>
            <person name="Kim H."/>
            <person name="Park H.-S."/>
            <person name="Yoon K.-O."/>
            <person name="Kim J.-H."/>
            <person name="Jung C.-H."/>
            <person name="Koh N.-H."/>
            <person name="Seo J.-S."/>
            <person name="Go S.-J."/>
        </authorList>
    </citation>
    <scope>NUCLEOTIDE SEQUENCE [LARGE SCALE GENOMIC DNA]</scope>
    <source>
        <strain>KACC10331 / KXO85</strain>
    </source>
</reference>
<organism>
    <name type="scientific">Xanthomonas oryzae pv. oryzae (strain KACC10331 / KXO85)</name>
    <dbReference type="NCBI Taxonomy" id="291331"/>
    <lineage>
        <taxon>Bacteria</taxon>
        <taxon>Pseudomonadati</taxon>
        <taxon>Pseudomonadota</taxon>
        <taxon>Gammaproteobacteria</taxon>
        <taxon>Lysobacterales</taxon>
        <taxon>Lysobacteraceae</taxon>
        <taxon>Xanthomonas</taxon>
    </lineage>
</organism>
<keyword id="KW-0030">Aminoacyl-tRNA synthetase</keyword>
<keyword id="KW-0067">ATP-binding</keyword>
<keyword id="KW-0963">Cytoplasm</keyword>
<keyword id="KW-0436">Ligase</keyword>
<keyword id="KW-0479">Metal-binding</keyword>
<keyword id="KW-0547">Nucleotide-binding</keyword>
<keyword id="KW-0648">Protein biosynthesis</keyword>
<keyword id="KW-1185">Reference proteome</keyword>
<keyword id="KW-0862">Zinc</keyword>
<sequence length="476" mass="51783">MPMSLRLHNNLTRRVEPFTPLDPSSPTLYVCGPTVYNYAHIGNARGPVVFDVLAALLRRRYGALRYARNITDVDDKINAAAQAQGVPISTITDRFAAIYRQDMAALGVVPPDIEPEATAHIPQIVAMIEQLIANGHAYAAEGHVLFSVSSFEDYGKLSRRDPDEMLAGARVDVAPYKRDPGDFVLWKPSSDELPGWESPWGRGRPGWHIECSAMAAAHLGPTIDIHAGGVDLQFPHHENEIAQSECAHGGATFARFWLHNGMLNFSGAKMSKSLGNIETVHDLIAKHPPEALRYALLSAHYRQPLDWSDGLIEQATNTLDRLYGTLRDLAALEACGSSGVEVSKTIPVEVESALQDDLNTPLALSVIASIASEARALRNELVHGGEPSARMSELHAVRAKLLGAGLALGLLQQDPAAWFSRGTDADDDARITALVQERSAAKKAKDFARADAIRKQLADEGIVLEDTPQGVRWKRA</sequence>